<feature type="chain" id="PRO_0000057582" description="Gamma-crystallin D">
    <location>
        <begin position="1"/>
        <end position="174"/>
    </location>
</feature>
<feature type="domain" description="Beta/gamma crystallin 'Greek key' 1" evidence="1">
    <location>
        <begin position="2"/>
        <end position="40"/>
    </location>
</feature>
<feature type="domain" description="Beta/gamma crystallin 'Greek key' 2" evidence="1">
    <location>
        <begin position="41"/>
        <end position="83"/>
    </location>
</feature>
<feature type="domain" description="Beta/gamma crystallin 'Greek key' 3" evidence="1">
    <location>
        <begin position="88"/>
        <end position="128"/>
    </location>
</feature>
<feature type="domain" description="Beta/gamma crystallin 'Greek key' 4" evidence="1">
    <location>
        <begin position="129"/>
        <end position="171"/>
    </location>
</feature>
<feature type="region of interest" description="Connecting peptide">
    <location>
        <begin position="84"/>
        <end position="87"/>
    </location>
</feature>
<feature type="sequence conflict" description="In Ref. 2; AAB59282." evidence="2" ref="2">
    <original>V</original>
    <variation>I</variation>
    <location>
        <position position="76"/>
    </location>
</feature>
<feature type="strand" evidence="3">
    <location>
        <begin position="3"/>
        <end position="9"/>
    </location>
</feature>
<feature type="helix" evidence="3">
    <location>
        <begin position="10"/>
        <end position="12"/>
    </location>
</feature>
<feature type="strand" evidence="3">
    <location>
        <begin position="13"/>
        <end position="21"/>
    </location>
</feature>
<feature type="turn" evidence="3">
    <location>
        <begin position="27"/>
        <end position="29"/>
    </location>
</feature>
<feature type="strand" evidence="3">
    <location>
        <begin position="34"/>
        <end position="41"/>
    </location>
</feature>
<feature type="strand" evidence="3">
    <location>
        <begin position="43"/>
        <end position="49"/>
    </location>
</feature>
<feature type="strand" evidence="3">
    <location>
        <begin position="53"/>
        <end position="58"/>
    </location>
</feature>
<feature type="strand" evidence="3">
    <location>
        <begin position="60"/>
        <end position="65"/>
    </location>
</feature>
<feature type="helix" evidence="3">
    <location>
        <begin position="66"/>
        <end position="69"/>
    </location>
</feature>
<feature type="strand" evidence="3">
    <location>
        <begin position="72"/>
        <end position="74"/>
    </location>
</feature>
<feature type="strand" evidence="3">
    <location>
        <begin position="78"/>
        <end position="81"/>
    </location>
</feature>
<feature type="strand" evidence="3">
    <location>
        <begin position="89"/>
        <end position="95"/>
    </location>
</feature>
<feature type="turn" evidence="3">
    <location>
        <begin position="96"/>
        <end position="98"/>
    </location>
</feature>
<feature type="strand" evidence="3">
    <location>
        <begin position="99"/>
        <end position="107"/>
    </location>
</feature>
<feature type="helix" evidence="3">
    <location>
        <begin position="112"/>
        <end position="115"/>
    </location>
</feature>
<feature type="strand" evidence="3">
    <location>
        <begin position="123"/>
        <end position="129"/>
    </location>
</feature>
<feature type="strand" evidence="3">
    <location>
        <begin position="131"/>
        <end position="136"/>
    </location>
</feature>
<feature type="turn" evidence="3">
    <location>
        <begin position="137"/>
        <end position="139"/>
    </location>
</feature>
<feature type="strand" evidence="3">
    <location>
        <begin position="140"/>
        <end position="146"/>
    </location>
</feature>
<feature type="strand" evidence="3">
    <location>
        <begin position="148"/>
        <end position="153"/>
    </location>
</feature>
<feature type="helix" evidence="3">
    <location>
        <begin position="154"/>
        <end position="157"/>
    </location>
</feature>
<feature type="strand" evidence="3">
    <location>
        <begin position="160"/>
        <end position="163"/>
    </location>
</feature>
<feature type="strand" evidence="3">
    <location>
        <begin position="166"/>
        <end position="169"/>
    </location>
</feature>
<name>CRGD_BOVIN</name>
<organism>
    <name type="scientific">Bos taurus</name>
    <name type="common">Bovine</name>
    <dbReference type="NCBI Taxonomy" id="9913"/>
    <lineage>
        <taxon>Eukaryota</taxon>
        <taxon>Metazoa</taxon>
        <taxon>Chordata</taxon>
        <taxon>Craniata</taxon>
        <taxon>Vertebrata</taxon>
        <taxon>Euteleostomi</taxon>
        <taxon>Mammalia</taxon>
        <taxon>Eutheria</taxon>
        <taxon>Laurasiatheria</taxon>
        <taxon>Artiodactyla</taxon>
        <taxon>Ruminantia</taxon>
        <taxon>Pecora</taxon>
        <taxon>Bovidae</taxon>
        <taxon>Bovinae</taxon>
        <taxon>Bos</taxon>
    </lineage>
</organism>
<dbReference type="EMBL" id="L27070">
    <property type="protein sequence ID" value="AAA98995.1"/>
    <property type="molecule type" value="mRNA"/>
</dbReference>
<dbReference type="EMBL" id="M16895">
    <property type="protein sequence ID" value="AAB59282.1"/>
    <property type="molecule type" value="mRNA"/>
</dbReference>
<dbReference type="PIR" id="B29655">
    <property type="entry name" value="B29655"/>
</dbReference>
<dbReference type="RefSeq" id="NP_776716.1">
    <property type="nucleotide sequence ID" value="NM_174291.2"/>
</dbReference>
<dbReference type="PDB" id="1ELP">
    <property type="method" value="X-ray"/>
    <property type="resolution" value="1.95 A"/>
    <property type="chains" value="A/B=2-174"/>
</dbReference>
<dbReference type="PDBsum" id="1ELP"/>
<dbReference type="PCDDB" id="P08209"/>
<dbReference type="SMR" id="P08209"/>
<dbReference type="FunCoup" id="P08209">
    <property type="interactions" value="27"/>
</dbReference>
<dbReference type="STRING" id="9913.ENSBTAP00000029019"/>
<dbReference type="PaxDb" id="9913-ENSBTAP00000029019"/>
<dbReference type="GeneID" id="281723"/>
<dbReference type="KEGG" id="bta:281723"/>
<dbReference type="CTD" id="1421"/>
<dbReference type="eggNOG" id="ENOG502RXJY">
    <property type="taxonomic scope" value="Eukaryota"/>
</dbReference>
<dbReference type="InParanoid" id="P08209"/>
<dbReference type="OrthoDB" id="8407241at2759"/>
<dbReference type="EvolutionaryTrace" id="P08209"/>
<dbReference type="Proteomes" id="UP000009136">
    <property type="component" value="Unplaced"/>
</dbReference>
<dbReference type="GO" id="GO:0005212">
    <property type="term" value="F:structural constituent of eye lens"/>
    <property type="evidence" value="ECO:0000318"/>
    <property type="project" value="GO_Central"/>
</dbReference>
<dbReference type="GO" id="GO:0002088">
    <property type="term" value="P:lens development in camera-type eye"/>
    <property type="evidence" value="ECO:0000318"/>
    <property type="project" value="GO_Central"/>
</dbReference>
<dbReference type="GO" id="GO:0007601">
    <property type="term" value="P:visual perception"/>
    <property type="evidence" value="ECO:0000318"/>
    <property type="project" value="GO_Central"/>
</dbReference>
<dbReference type="FunFam" id="2.60.20.10:FF:000001">
    <property type="entry name" value="Crystallin gamma S"/>
    <property type="match status" value="1"/>
</dbReference>
<dbReference type="FunFam" id="2.60.20.10:FF:000003">
    <property type="entry name" value="Crystallin gamma S"/>
    <property type="match status" value="1"/>
</dbReference>
<dbReference type="Gene3D" id="2.60.20.10">
    <property type="entry name" value="Crystallins"/>
    <property type="match status" value="2"/>
</dbReference>
<dbReference type="InterPro" id="IPR050252">
    <property type="entry name" value="Beta/Gamma-Crystallin"/>
</dbReference>
<dbReference type="InterPro" id="IPR001064">
    <property type="entry name" value="Beta/gamma_crystallin"/>
</dbReference>
<dbReference type="InterPro" id="IPR011024">
    <property type="entry name" value="G_crystallin-like"/>
</dbReference>
<dbReference type="PANTHER" id="PTHR11818">
    <property type="entry name" value="BETA/GAMMA CRYSTALLIN"/>
    <property type="match status" value="1"/>
</dbReference>
<dbReference type="PANTHER" id="PTHR11818:SF124">
    <property type="entry name" value="GAMMA-CRYSTALLIN D"/>
    <property type="match status" value="1"/>
</dbReference>
<dbReference type="Pfam" id="PF00030">
    <property type="entry name" value="Crystall"/>
    <property type="match status" value="2"/>
</dbReference>
<dbReference type="PRINTS" id="PR01367">
    <property type="entry name" value="BGCRYSTALLIN"/>
</dbReference>
<dbReference type="SMART" id="SM00247">
    <property type="entry name" value="XTALbg"/>
    <property type="match status" value="2"/>
</dbReference>
<dbReference type="SUPFAM" id="SSF49695">
    <property type="entry name" value="gamma-Crystallin-like"/>
    <property type="match status" value="1"/>
</dbReference>
<dbReference type="PROSITE" id="PS50915">
    <property type="entry name" value="CRYSTALLIN_BETA_GAMMA"/>
    <property type="match status" value="4"/>
</dbReference>
<sequence length="174" mass="20866">MGKITFYEDRGFQGRHYECSSDHSNLQPYLGRCNSVRVDSGCWMIYEQPNYLGPQYFLRRGDYPDYQQWMGLNDSVRSCRLIPHAGSHRLRLYEREDYRGQMIEITEDCSSLQDRFHFNEIHSLNVLEGSWVLYELPNYRGRQYLLRPGEYRRYHDWGAMNAKVGSLRRVIDIY</sequence>
<accession>P08209</accession>
<accession>Q28089</accession>
<evidence type="ECO:0000255" key="1">
    <source>
        <dbReference type="PROSITE-ProRule" id="PRU00028"/>
    </source>
</evidence>
<evidence type="ECO:0000305" key="2"/>
<evidence type="ECO:0007829" key="3">
    <source>
        <dbReference type="PDB" id="1ELP"/>
    </source>
</evidence>
<keyword id="KW-0002">3D-structure</keyword>
<keyword id="KW-0903">Direct protein sequencing</keyword>
<keyword id="KW-0273">Eye lens protein</keyword>
<keyword id="KW-1185">Reference proteome</keyword>
<keyword id="KW-0677">Repeat</keyword>
<protein>
    <recommendedName>
        <fullName>Gamma-crystallin D</fullName>
    </recommendedName>
    <alternativeName>
        <fullName>Gamma-D-crystallin</fullName>
    </alternativeName>
    <alternativeName>
        <fullName>Gamma-crystallin IIIB</fullName>
    </alternativeName>
</protein>
<proteinExistence type="evidence at protein level"/>
<gene>
    <name type="primary">CRYGD</name>
</gene>
<comment type="function">
    <text>Crystallins are the dominant structural components of the vertebrate eye lens.</text>
</comment>
<comment type="domain">
    <text>Has a two-domain beta-structure, folded into four very similar Greek key motifs.</text>
</comment>
<comment type="similarity">
    <text evidence="2">Belongs to the beta/gamma-crystallin family.</text>
</comment>
<reference key="1">
    <citation type="journal article" date="1994" name="Exp. Eye Res.">
        <title>Expression of recombinant bovine gamma B-, gamma C- and gamma D-crystallins and correlation with native proteins.</title>
        <authorList>
            <person name="Hay R.E."/>
            <person name="Andley U.P."/>
            <person name="Petrash J.M."/>
        </authorList>
    </citation>
    <scope>NUCLEOTIDE SEQUENCE [MRNA]</scope>
    <scope>PARTIAL PROTEIN SEQUENCE</scope>
    <source>
        <tissue>Lens</tissue>
    </source>
</reference>
<reference key="2">
    <citation type="journal article" date="1987" name="Biochem. Biophys. Res. Commun.">
        <title>cDNA clones encoding bovine gamma-crystallins.</title>
        <authorList>
            <person name="Hay R.E."/>
            <person name="Woods W.D."/>
            <person name="Church R.L."/>
            <person name="Petrash J.M."/>
        </authorList>
    </citation>
    <scope>NUCLEOTIDE SEQUENCE [MRNA] OF 1-157</scope>
    <source>
        <tissue>Lens</tissue>
    </source>
</reference>
<reference key="3">
    <citation type="journal article" date="1996" name="Acta Crystallogr. D">
        <title>Structure of bovine eye lens gammaD (gammaIIIb)-crystallin at 1.95 A.</title>
        <authorList>
            <person name="Chirgadze Y.N."/>
            <person name="Driessen H.P.C."/>
            <person name="Wright G."/>
            <person name="Slingsby C."/>
            <person name="Hay R.E."/>
            <person name="Lindley P.F."/>
        </authorList>
    </citation>
    <scope>X-RAY CRYSTALLOGRAPHY (1.95 ANGSTROMS)</scope>
</reference>